<keyword id="KW-0025">Alternative splicing</keyword>
<keyword id="KW-0325">Glycoprotein</keyword>
<keyword id="KW-0458">Lysosome</keyword>
<keyword id="KW-0472">Membrane</keyword>
<keyword id="KW-1267">Proteomics identification</keyword>
<keyword id="KW-1185">Reference proteome</keyword>
<keyword id="KW-0732">Signal</keyword>
<keyword id="KW-0769">Symport</keyword>
<keyword id="KW-0812">Transmembrane</keyword>
<keyword id="KW-1133">Transmembrane helix</keyword>
<keyword id="KW-0813">Transport</keyword>
<accession>Q7Z3Q1</accession>
<accession>Q3ZCV8</accession>
<accession>Q6NUK5</accession>
<accession>Q6P9B3</accession>
<accession>Q6ZVG5</accession>
<accession>Q96QA1</accession>
<feature type="signal peptide" evidence="2">
    <location>
        <begin position="1"/>
        <end position="25"/>
    </location>
</feature>
<feature type="chain" id="PRO_0000307253" description="Lysosomal proton-coupled steroid conjugate and bile acid symporter SLC46A3">
    <location>
        <begin position="26"/>
        <end position="461"/>
    </location>
</feature>
<feature type="topological domain" description="Extracellular" evidence="2">
    <location>
        <begin position="26"/>
        <end position="73"/>
    </location>
</feature>
<feature type="transmembrane region" description="Helical" evidence="2">
    <location>
        <begin position="74"/>
        <end position="94"/>
    </location>
</feature>
<feature type="topological domain" description="Cytoplasmic" evidence="2">
    <location>
        <begin position="95"/>
        <end position="101"/>
    </location>
</feature>
<feature type="transmembrane region" description="Helical" evidence="2">
    <location>
        <begin position="102"/>
        <end position="124"/>
    </location>
</feature>
<feature type="topological domain" description="Extracellular" evidence="2">
    <location>
        <begin position="125"/>
        <end position="133"/>
    </location>
</feature>
<feature type="transmembrane region" description="Helical" evidence="2">
    <location>
        <begin position="134"/>
        <end position="156"/>
    </location>
</feature>
<feature type="topological domain" description="Cytoplasmic" evidence="2">
    <location>
        <begin position="157"/>
        <end position="170"/>
    </location>
</feature>
<feature type="transmembrane region" description="Helical" evidence="2">
    <location>
        <begin position="171"/>
        <end position="191"/>
    </location>
</feature>
<feature type="topological domain" description="Extracellular" evidence="2">
    <location>
        <begin position="192"/>
        <end position="197"/>
    </location>
</feature>
<feature type="transmembrane region" description="Helical" evidence="2">
    <location>
        <begin position="198"/>
        <end position="218"/>
    </location>
</feature>
<feature type="topological domain" description="Cytoplasmic" evidence="2">
    <location>
        <begin position="219"/>
        <end position="261"/>
    </location>
</feature>
<feature type="transmembrane region" description="Helical" evidence="2">
    <location>
        <begin position="262"/>
        <end position="282"/>
    </location>
</feature>
<feature type="topological domain" description="Extracellular" evidence="2">
    <location>
        <begin position="283"/>
        <end position="294"/>
    </location>
</feature>
<feature type="transmembrane region" description="Helical" evidence="2">
    <location>
        <begin position="295"/>
        <end position="315"/>
    </location>
</feature>
<feature type="topological domain" description="Cytoplasmic" evidence="2">
    <location>
        <begin position="316"/>
        <end position="324"/>
    </location>
</feature>
<feature type="transmembrane region" description="Helical" evidence="2">
    <location>
        <begin position="325"/>
        <end position="345"/>
    </location>
</feature>
<feature type="topological domain" description="Extracellular" evidence="2">
    <location>
        <begin position="346"/>
        <end position="347"/>
    </location>
</feature>
<feature type="transmembrane region" description="Helical" evidence="2">
    <location>
        <begin position="348"/>
        <end position="368"/>
    </location>
</feature>
<feature type="topological domain" description="Cytoplasmic" evidence="2">
    <location>
        <begin position="369"/>
        <end position="382"/>
    </location>
</feature>
<feature type="transmembrane region" description="Helical" evidence="2">
    <location>
        <begin position="383"/>
        <end position="403"/>
    </location>
</feature>
<feature type="topological domain" description="Extracellular" evidence="2">
    <location>
        <begin position="404"/>
        <end position="415"/>
    </location>
</feature>
<feature type="transmembrane region" description="Helical" evidence="2">
    <location>
        <begin position="416"/>
        <end position="436"/>
    </location>
</feature>
<feature type="topological domain" description="Cytoplasmic" evidence="2">
    <location>
        <begin position="437"/>
        <end position="461"/>
    </location>
</feature>
<feature type="short sequence motif" description="Tyrosine-based lysosomal-sorting motif" evidence="7">
    <location>
        <begin position="446"/>
        <end position="449"/>
    </location>
</feature>
<feature type="glycosylation site" description="N-linked (GlcNAc...) asparagine" evidence="2">
    <location>
        <position position="38"/>
    </location>
</feature>
<feature type="glycosylation site" description="N-linked (GlcNAc...) asparagine" evidence="2">
    <location>
        <position position="46"/>
    </location>
</feature>
<feature type="glycosylation site" description="N-linked (GlcNAc...) asparagine" evidence="2">
    <location>
        <position position="53"/>
    </location>
</feature>
<feature type="splice variant" id="VSP_028648" description="In isoform 3." evidence="8">
    <location>
        <begin position="1"/>
        <end position="75"/>
    </location>
</feature>
<feature type="splice variant" id="VSP_028649" description="In isoform 2." evidence="9 10">
    <original>R</original>
    <variation>RAC</variation>
    <location>
        <position position="461"/>
    </location>
</feature>
<feature type="sequence conflict" description="In Ref. 6; AAH68556." evidence="11" ref="6">
    <original>V</original>
    <variation>I</variation>
    <location>
        <position position="109"/>
    </location>
</feature>
<feature type="sequence conflict" description="In Ref. 1; AAL18405." evidence="11" ref="1">
    <original>F</original>
    <variation>L</variation>
    <location>
        <position position="126"/>
    </location>
</feature>
<feature type="sequence conflict" description="In Ref. 1; AAL18405." evidence="11" ref="1">
    <original>F</original>
    <variation>I</variation>
    <location>
        <position position="140"/>
    </location>
</feature>
<feature type="sequence conflict" description="In Ref. 6; AAH36662." evidence="11" ref="6">
    <original>C</original>
    <variation>F</variation>
    <location>
        <position position="159"/>
    </location>
</feature>
<reference key="1">
    <citation type="submission" date="2000-10" db="EMBL/GenBank/DDBJ databases">
        <title>Cloning of FKSG16, a novel gene located on chromosome 13.</title>
        <authorList>
            <person name="Wang Y.-G."/>
            <person name="Gong L."/>
        </authorList>
    </citation>
    <scope>NUCLEOTIDE SEQUENCE [MRNA] (ISOFORM 2)</scope>
</reference>
<reference key="2">
    <citation type="journal article" date="2004" name="Nat. Genet.">
        <title>Complete sequencing and characterization of 21,243 full-length human cDNAs.</title>
        <authorList>
            <person name="Ota T."/>
            <person name="Suzuki Y."/>
            <person name="Nishikawa T."/>
            <person name="Otsuki T."/>
            <person name="Sugiyama T."/>
            <person name="Irie R."/>
            <person name="Wakamatsu A."/>
            <person name="Hayashi K."/>
            <person name="Sato H."/>
            <person name="Nagai K."/>
            <person name="Kimura K."/>
            <person name="Makita H."/>
            <person name="Sekine M."/>
            <person name="Obayashi M."/>
            <person name="Nishi T."/>
            <person name="Shibahara T."/>
            <person name="Tanaka T."/>
            <person name="Ishii S."/>
            <person name="Yamamoto J."/>
            <person name="Saito K."/>
            <person name="Kawai Y."/>
            <person name="Isono Y."/>
            <person name="Nakamura Y."/>
            <person name="Nagahari K."/>
            <person name="Murakami K."/>
            <person name="Yasuda T."/>
            <person name="Iwayanagi T."/>
            <person name="Wagatsuma M."/>
            <person name="Shiratori A."/>
            <person name="Sudo H."/>
            <person name="Hosoiri T."/>
            <person name="Kaku Y."/>
            <person name="Kodaira H."/>
            <person name="Kondo H."/>
            <person name="Sugawara M."/>
            <person name="Takahashi M."/>
            <person name="Kanda K."/>
            <person name="Yokoi T."/>
            <person name="Furuya T."/>
            <person name="Kikkawa E."/>
            <person name="Omura Y."/>
            <person name="Abe K."/>
            <person name="Kamihara K."/>
            <person name="Katsuta N."/>
            <person name="Sato K."/>
            <person name="Tanikawa M."/>
            <person name="Yamazaki M."/>
            <person name="Ninomiya K."/>
            <person name="Ishibashi T."/>
            <person name="Yamashita H."/>
            <person name="Murakawa K."/>
            <person name="Fujimori K."/>
            <person name="Tanai H."/>
            <person name="Kimata M."/>
            <person name="Watanabe M."/>
            <person name="Hiraoka S."/>
            <person name="Chiba Y."/>
            <person name="Ishida S."/>
            <person name="Ono Y."/>
            <person name="Takiguchi S."/>
            <person name="Watanabe S."/>
            <person name="Yosida M."/>
            <person name="Hotuta T."/>
            <person name="Kusano J."/>
            <person name="Kanehori K."/>
            <person name="Takahashi-Fujii A."/>
            <person name="Hara H."/>
            <person name="Tanase T.-O."/>
            <person name="Nomura Y."/>
            <person name="Togiya S."/>
            <person name="Komai F."/>
            <person name="Hara R."/>
            <person name="Takeuchi K."/>
            <person name="Arita M."/>
            <person name="Imose N."/>
            <person name="Musashino K."/>
            <person name="Yuuki H."/>
            <person name="Oshima A."/>
            <person name="Sasaki N."/>
            <person name="Aotsuka S."/>
            <person name="Yoshikawa Y."/>
            <person name="Matsunawa H."/>
            <person name="Ichihara T."/>
            <person name="Shiohata N."/>
            <person name="Sano S."/>
            <person name="Moriya S."/>
            <person name="Momiyama H."/>
            <person name="Satoh N."/>
            <person name="Takami S."/>
            <person name="Terashima Y."/>
            <person name="Suzuki O."/>
            <person name="Nakagawa S."/>
            <person name="Senoh A."/>
            <person name="Mizoguchi H."/>
            <person name="Goto Y."/>
            <person name="Shimizu F."/>
            <person name="Wakebe H."/>
            <person name="Hishigaki H."/>
            <person name="Watanabe T."/>
            <person name="Sugiyama A."/>
            <person name="Takemoto M."/>
            <person name="Kawakami B."/>
            <person name="Yamazaki M."/>
            <person name="Watanabe K."/>
            <person name="Kumagai A."/>
            <person name="Itakura S."/>
            <person name="Fukuzumi Y."/>
            <person name="Fujimori Y."/>
            <person name="Komiyama M."/>
            <person name="Tashiro H."/>
            <person name="Tanigami A."/>
            <person name="Fujiwara T."/>
            <person name="Ono T."/>
            <person name="Yamada K."/>
            <person name="Fujii Y."/>
            <person name="Ozaki K."/>
            <person name="Hirao M."/>
            <person name="Ohmori Y."/>
            <person name="Kawabata A."/>
            <person name="Hikiji T."/>
            <person name="Kobatake N."/>
            <person name="Inagaki H."/>
            <person name="Ikema Y."/>
            <person name="Okamoto S."/>
            <person name="Okitani R."/>
            <person name="Kawakami T."/>
            <person name="Noguchi S."/>
            <person name="Itoh T."/>
            <person name="Shigeta K."/>
            <person name="Senba T."/>
            <person name="Matsumura K."/>
            <person name="Nakajima Y."/>
            <person name="Mizuno T."/>
            <person name="Morinaga M."/>
            <person name="Sasaki M."/>
            <person name="Togashi T."/>
            <person name="Oyama M."/>
            <person name="Hata H."/>
            <person name="Watanabe M."/>
            <person name="Komatsu T."/>
            <person name="Mizushima-Sugano J."/>
            <person name="Satoh T."/>
            <person name="Shirai Y."/>
            <person name="Takahashi Y."/>
            <person name="Nakagawa K."/>
            <person name="Okumura K."/>
            <person name="Nagase T."/>
            <person name="Nomura N."/>
            <person name="Kikuchi H."/>
            <person name="Masuho Y."/>
            <person name="Yamashita R."/>
            <person name="Nakai K."/>
            <person name="Yada T."/>
            <person name="Nakamura Y."/>
            <person name="Ohara O."/>
            <person name="Isogai T."/>
            <person name="Sugano S."/>
        </authorList>
    </citation>
    <scope>NUCLEOTIDE SEQUENCE [LARGE SCALE MRNA] (ISOFORM 3)</scope>
    <source>
        <tissue>Cerebellum</tissue>
    </source>
</reference>
<reference key="3">
    <citation type="journal article" date="2007" name="BMC Genomics">
        <title>The full-ORF clone resource of the German cDNA consortium.</title>
        <authorList>
            <person name="Bechtel S."/>
            <person name="Rosenfelder H."/>
            <person name="Duda A."/>
            <person name="Schmidt C.P."/>
            <person name="Ernst U."/>
            <person name="Wellenreuther R."/>
            <person name="Mehrle A."/>
            <person name="Schuster C."/>
            <person name="Bahr A."/>
            <person name="Bloecker H."/>
            <person name="Heubner D."/>
            <person name="Hoerlein A."/>
            <person name="Michel G."/>
            <person name="Wedler H."/>
            <person name="Koehrer K."/>
            <person name="Ottenwaelder B."/>
            <person name="Poustka A."/>
            <person name="Wiemann S."/>
            <person name="Schupp I."/>
        </authorList>
    </citation>
    <scope>NUCLEOTIDE SEQUENCE [LARGE SCALE MRNA] (ISOFORM 1)</scope>
    <source>
        <tissue>Endometrial adenocarcinoma</tissue>
    </source>
</reference>
<reference key="4">
    <citation type="journal article" date="2004" name="Nature">
        <title>The DNA sequence and analysis of human chromosome 13.</title>
        <authorList>
            <person name="Dunham A."/>
            <person name="Matthews L.H."/>
            <person name="Burton J."/>
            <person name="Ashurst J.L."/>
            <person name="Howe K.L."/>
            <person name="Ashcroft K.J."/>
            <person name="Beare D.M."/>
            <person name="Burford D.C."/>
            <person name="Hunt S.E."/>
            <person name="Griffiths-Jones S."/>
            <person name="Jones M.C."/>
            <person name="Keenan S.J."/>
            <person name="Oliver K."/>
            <person name="Scott C.E."/>
            <person name="Ainscough R."/>
            <person name="Almeida J.P."/>
            <person name="Ambrose K.D."/>
            <person name="Andrews D.T."/>
            <person name="Ashwell R.I.S."/>
            <person name="Babbage A.K."/>
            <person name="Bagguley C.L."/>
            <person name="Bailey J."/>
            <person name="Bannerjee R."/>
            <person name="Barlow K.F."/>
            <person name="Bates K."/>
            <person name="Beasley H."/>
            <person name="Bird C.P."/>
            <person name="Bray-Allen S."/>
            <person name="Brown A.J."/>
            <person name="Brown J.Y."/>
            <person name="Burrill W."/>
            <person name="Carder C."/>
            <person name="Carter N.P."/>
            <person name="Chapman J.C."/>
            <person name="Clamp M.E."/>
            <person name="Clark S.Y."/>
            <person name="Clarke G."/>
            <person name="Clee C.M."/>
            <person name="Clegg S.C."/>
            <person name="Cobley V."/>
            <person name="Collins J.E."/>
            <person name="Corby N."/>
            <person name="Coville G.J."/>
            <person name="Deloukas P."/>
            <person name="Dhami P."/>
            <person name="Dunham I."/>
            <person name="Dunn M."/>
            <person name="Earthrowl M.E."/>
            <person name="Ellington A.G."/>
            <person name="Faulkner L."/>
            <person name="Frankish A.G."/>
            <person name="Frankland J."/>
            <person name="French L."/>
            <person name="Garner P."/>
            <person name="Garnett J."/>
            <person name="Gilbert J.G.R."/>
            <person name="Gilson C.J."/>
            <person name="Ghori J."/>
            <person name="Grafham D.V."/>
            <person name="Gribble S.M."/>
            <person name="Griffiths C."/>
            <person name="Hall R.E."/>
            <person name="Hammond S."/>
            <person name="Harley J.L."/>
            <person name="Hart E.A."/>
            <person name="Heath P.D."/>
            <person name="Howden P.J."/>
            <person name="Huckle E.J."/>
            <person name="Hunt P.J."/>
            <person name="Hunt A.R."/>
            <person name="Johnson C."/>
            <person name="Johnson D."/>
            <person name="Kay M."/>
            <person name="Kimberley A.M."/>
            <person name="King A."/>
            <person name="Laird G.K."/>
            <person name="Langford C.J."/>
            <person name="Lawlor S."/>
            <person name="Leongamornlert D.A."/>
            <person name="Lloyd D.M."/>
            <person name="Lloyd C."/>
            <person name="Loveland J.E."/>
            <person name="Lovell J."/>
            <person name="Martin S."/>
            <person name="Mashreghi-Mohammadi M."/>
            <person name="McLaren S.J."/>
            <person name="McMurray A."/>
            <person name="Milne S."/>
            <person name="Moore M.J.F."/>
            <person name="Nickerson T."/>
            <person name="Palmer S.A."/>
            <person name="Pearce A.V."/>
            <person name="Peck A.I."/>
            <person name="Pelan S."/>
            <person name="Phillimore B."/>
            <person name="Porter K.M."/>
            <person name="Rice C.M."/>
            <person name="Searle S."/>
            <person name="Sehra H.K."/>
            <person name="Shownkeen R."/>
            <person name="Skuce C.D."/>
            <person name="Smith M."/>
            <person name="Steward C.A."/>
            <person name="Sycamore N."/>
            <person name="Tester J."/>
            <person name="Thomas D.W."/>
            <person name="Tracey A."/>
            <person name="Tromans A."/>
            <person name="Tubby B."/>
            <person name="Wall M."/>
            <person name="Wallis J.M."/>
            <person name="West A.P."/>
            <person name="Whitehead S.L."/>
            <person name="Willey D.L."/>
            <person name="Wilming L."/>
            <person name="Wray P.W."/>
            <person name="Wright M.W."/>
            <person name="Young L."/>
            <person name="Coulson A."/>
            <person name="Durbin R.M."/>
            <person name="Hubbard T."/>
            <person name="Sulston J.E."/>
            <person name="Beck S."/>
            <person name="Bentley D.R."/>
            <person name="Rogers J."/>
            <person name="Ross M.T."/>
        </authorList>
    </citation>
    <scope>NUCLEOTIDE SEQUENCE [LARGE SCALE GENOMIC DNA]</scope>
</reference>
<reference key="5">
    <citation type="submission" date="2005-07" db="EMBL/GenBank/DDBJ databases">
        <authorList>
            <person name="Mural R.J."/>
            <person name="Istrail S."/>
            <person name="Sutton G.G."/>
            <person name="Florea L."/>
            <person name="Halpern A.L."/>
            <person name="Mobarry C.M."/>
            <person name="Lippert R."/>
            <person name="Walenz B."/>
            <person name="Shatkay H."/>
            <person name="Dew I."/>
            <person name="Miller J.R."/>
            <person name="Flanigan M.J."/>
            <person name="Edwards N.J."/>
            <person name="Bolanos R."/>
            <person name="Fasulo D."/>
            <person name="Halldorsson B.V."/>
            <person name="Hannenhalli S."/>
            <person name="Turner R."/>
            <person name="Yooseph S."/>
            <person name="Lu F."/>
            <person name="Nusskern D.R."/>
            <person name="Shue B.C."/>
            <person name="Zheng X.H."/>
            <person name="Zhong F."/>
            <person name="Delcher A.L."/>
            <person name="Huson D.H."/>
            <person name="Kravitz S.A."/>
            <person name="Mouchard L."/>
            <person name="Reinert K."/>
            <person name="Remington K.A."/>
            <person name="Clark A.G."/>
            <person name="Waterman M.S."/>
            <person name="Eichler E.E."/>
            <person name="Adams M.D."/>
            <person name="Hunkapiller M.W."/>
            <person name="Myers E.W."/>
            <person name="Venter J.C."/>
        </authorList>
    </citation>
    <scope>NUCLEOTIDE SEQUENCE [LARGE SCALE GENOMIC DNA]</scope>
</reference>
<reference key="6">
    <citation type="journal article" date="2004" name="Genome Res.">
        <title>The status, quality, and expansion of the NIH full-length cDNA project: the Mammalian Gene Collection (MGC).</title>
        <authorList>
            <consortium name="The MGC Project Team"/>
        </authorList>
    </citation>
    <scope>NUCLEOTIDE SEQUENCE [LARGE SCALE MRNA] (ISOFORMS 1 AND 2)</scope>
    <source>
        <tissue>Brain</tissue>
        <tissue>Testis</tissue>
    </source>
</reference>
<reference key="7">
    <citation type="journal article" date="2015" name="Cancer Res.">
        <title>SLC46A3 Is Required to Transport Catabolites of Noncleavable Antibody Maytansine Conjugates from the Lysosome to the Cytoplasm.</title>
        <authorList>
            <person name="Hamblett K.J."/>
            <person name="Jacob A.P."/>
            <person name="Gurgel J.L."/>
            <person name="Tometsko M.E."/>
            <person name="Rock B.M."/>
            <person name="Patel S.K."/>
            <person name="Milburn R.R."/>
            <person name="Siu S."/>
            <person name="Ragan S.P."/>
            <person name="Rock D.A."/>
            <person name="Borths C.J."/>
            <person name="O'Neill J.W."/>
            <person name="Chang W.S."/>
            <person name="Weidner M.F."/>
            <person name="Bio M.M."/>
            <person name="Quon K.C."/>
            <person name="Fanslow W.C."/>
        </authorList>
    </citation>
    <scope>FUNCTION</scope>
    <scope>SUBCELLULAR LOCATION</scope>
</reference>
<reference key="8">
    <citation type="journal article" date="2018" name="Clin. Cancer Res.">
        <title>SLC46A3 as a Potential Predictive Biomarker for Antibody-Drug Conjugates Bearing Noncleavable Linked Maytansinoid and Pyrrolobenzodiazepine Warheads.</title>
        <authorList>
            <person name="Kinneer K."/>
            <person name="Meekin J."/>
            <person name="Tiberghien A.C."/>
            <person name="Tai Y.T."/>
            <person name="Phipps S."/>
            <person name="Kiefer C.M."/>
            <person name="Rebelatto M.C."/>
            <person name="Dimasi N."/>
            <person name="Moriarty A."/>
            <person name="Papadopoulos K.P."/>
            <person name="Sridhar S."/>
            <person name="Gregson S.J."/>
            <person name="Wick M.J."/>
            <person name="Masterson L."/>
            <person name="Anderson K.C."/>
            <person name="Herbst R."/>
            <person name="Howard P.W."/>
            <person name="Tice D.A."/>
        </authorList>
    </citation>
    <scope>FUNCTION</scope>
</reference>
<reference key="9">
    <citation type="journal article" date="2021" name="ACS Cent. Sci.">
        <title>Human SLC46A2 Is the Dominant cGAMP Importer in Extracellular cGAMP-Sensing Macrophages and Monocytes.</title>
        <authorList>
            <person name="Cordova A.F."/>
            <person name="Ritchie C."/>
            <person name="Boehnert V."/>
            <person name="Li L."/>
        </authorList>
    </citation>
    <scope>FUNCTION</scope>
    <scope>TRANSPORTER ACTIVITY</scope>
</reference>
<reference key="10">
    <citation type="journal article" date="2022" name="Science">
        <title>Massively parallel pooled screening reveals genomic determinants of nanoparticle delivery.</title>
        <authorList>
            <person name="Boehnke N."/>
            <person name="Straehla J.P."/>
            <person name="Safford H.C."/>
            <person name="Kocak M."/>
            <person name="Rees M.G."/>
            <person name="Ronan M."/>
            <person name="Rosenberg D."/>
            <person name="Adelmann C.H."/>
            <person name="Chivukula R.R."/>
            <person name="Nabar N."/>
            <person name="Berger A.G."/>
            <person name="Lamson N.G."/>
            <person name="Cheah J.H."/>
            <person name="Li H."/>
            <person name="Roth J.A."/>
            <person name="Koehler A.N."/>
            <person name="Hammond P.T."/>
        </authorList>
    </citation>
    <scope>SUBCELLULAR LOCATION</scope>
</reference>
<reference key="11">
    <citation type="journal article" date="2022" name="PNAS Nexus">
        <title>SLC46A3 is a lysosomal proton-coupled steroid conjugate and bile acid transporter involved in transport of active catabolites of T-DM1.</title>
        <authorList>
            <person name="Tomabechi R."/>
            <person name="Kishimoto H."/>
            <person name="Sato T."/>
            <person name="Saito N."/>
            <person name="Kiyomiya K."/>
            <person name="Takada T."/>
            <person name="Higuchi K."/>
            <person name="Shirasaka Y."/>
            <person name="Inoue K."/>
        </authorList>
    </citation>
    <scope>FUNCTION</scope>
    <scope>SUBCELLULAR LOCATION</scope>
    <scope>BIOPHYSICOCHEMICAL PROPERTIES</scope>
</reference>
<protein>
    <recommendedName>
        <fullName evidence="13">Lysosomal proton-coupled steroid conjugate and bile acid symporter SLC46A3</fullName>
    </recommendedName>
    <alternativeName>
        <fullName>Solute carrier family 46 member 3</fullName>
    </alternativeName>
</protein>
<name>S46A3_HUMAN</name>
<evidence type="ECO:0000250" key="1">
    <source>
        <dbReference type="UniProtKB" id="Q9DC26"/>
    </source>
</evidence>
<evidence type="ECO:0000255" key="2"/>
<evidence type="ECO:0000269" key="3">
    <source>
    </source>
</evidence>
<evidence type="ECO:0000269" key="4">
    <source>
    </source>
</evidence>
<evidence type="ECO:0000269" key="5">
    <source>
    </source>
</evidence>
<evidence type="ECO:0000269" key="6">
    <source>
    </source>
</evidence>
<evidence type="ECO:0000269" key="7">
    <source>
    </source>
</evidence>
<evidence type="ECO:0000303" key="8">
    <source>
    </source>
</evidence>
<evidence type="ECO:0000303" key="9">
    <source>
    </source>
</evidence>
<evidence type="ECO:0000303" key="10">
    <source ref="1"/>
</evidence>
<evidence type="ECO:0000305" key="11"/>
<evidence type="ECO:0000305" key="12">
    <source>
    </source>
</evidence>
<evidence type="ECO:0000305" key="13">
    <source>
    </source>
</evidence>
<evidence type="ECO:0000312" key="14">
    <source>
        <dbReference type="HGNC" id="HGNC:27501"/>
    </source>
</evidence>
<sequence length="461" mass="51519">MKILFVEPAIFLSAFAMTLTGPLTTQYVYRRIWEETGNYTFSSDSNISECEKNKSSPIFAFQEEVQKKVSRFNLQMDISGLIPGLVSTFILLSISDHYGRKFPMILSSVGALATSVWLCLLCYFAFPFQLLIASTFIGAFCGNYTTFWGACFAYIVDQCKEHKQKTIRIAIIDFLLGLVTGLTGLSSGYFIRELGFEWSFLIIAVSLAVNLIYILFFLGDPVKECSSQNVTMSCSEGFKNLFYRTYMLFKNASGKRRFLLCLLLFTVITYFFVVIGIAPIFILYELDSPLCWNEVFIGYGSALGSASFLTSFLGIWLFSYCMEDIHMAFIGIFTTMTGMAMTAFASTTLMMFLARVPFLFTIVPFSVLRSMLSKVVRSTEQGTLFACIAFLETLGGVTAVSTFNGIYSATVAWYPGFTFLLSAGLLLLPAISLCVVKCTSWNEGSYELLIQEESSEDASDR</sequence>
<comment type="function">
    <text evidence="1 3 4 5 7 11">Lysosomal proton-coupled steroid conjugate and bile acid transporter. Preferentially recognizes lipophilic steroid conjugates or bile acis as endogenous substrates and seems to mediate escape from lysosomes to the cytoplasm (PubMed:36741448). Modulates hepatic cytosolic copper homeostasis, maybe acting as a lysosomal copper transporter and sequestering copper ions in the lysosome (By similarity). Transports catabolites of non-cleavable antibody-drug conjugates from the lysosome to the cytoplasm (PubMed:26631267, PubMed:30131388, PubMed:36741448). Delivers pathogen-associated molecular patterns to cytosolic pattern recognition receptors as part of the innate immune response to microbes. Selectively transports bacterial muramyl dipeptide (MDP) into the cytosol for recognition by NOD2, triggering inflammatory responses (By similarity). Likely acts as a redundant importer of cyclic GMP-AMP dinucleotides (cGAMPs) in monocyte and macrophage cell lineages (PubMed:34235268). The transport mechanism, its electrogenicity and stoichiometry remain to be elucidated (Probable).</text>
</comment>
<comment type="catalytic activity">
    <reaction evidence="7">
        <text>estrone 3-sulfate(out) + n H(+)(out) = estrone 3-sulfate(in) + n H(+)(in)</text>
        <dbReference type="Rhea" id="RHEA:75483"/>
        <dbReference type="ChEBI" id="CHEBI:15378"/>
        <dbReference type="ChEBI" id="CHEBI:60050"/>
    </reaction>
</comment>
<comment type="catalytic activity">
    <reaction evidence="7">
        <text>25-hydroxyvitamin D3 sulfate(out) + n H(+)(out) = 25-hydroxyvitamin D3 sulfate(in) + n H(+)(in)</text>
        <dbReference type="Rhea" id="RHEA:75491"/>
        <dbReference type="ChEBI" id="CHEBI:15378"/>
        <dbReference type="ChEBI" id="CHEBI:194336"/>
    </reaction>
</comment>
<comment type="catalytic activity">
    <reaction evidence="7">
        <text>cholate(out) + n H(+)(out) = cholate(in) + n H(+)(in)</text>
        <dbReference type="Rhea" id="RHEA:75499"/>
        <dbReference type="ChEBI" id="CHEBI:15378"/>
        <dbReference type="ChEBI" id="CHEBI:29747"/>
    </reaction>
</comment>
<comment type="catalytic activity">
    <reaction evidence="7">
        <text>glycocholate(out) + n H(+)(out) = glycocholate(in) + n H(+)(in)</text>
        <dbReference type="Rhea" id="RHEA:75503"/>
        <dbReference type="ChEBI" id="CHEBI:15378"/>
        <dbReference type="ChEBI" id="CHEBI:29746"/>
    </reaction>
</comment>
<comment type="catalytic activity">
    <reaction evidence="7">
        <text>taurocholate(out) + n H(+)(out) = taurocholate(in) + n H(+)(in)</text>
        <dbReference type="Rhea" id="RHEA:75507"/>
        <dbReference type="ChEBI" id="CHEBI:15378"/>
        <dbReference type="ChEBI" id="CHEBI:36257"/>
    </reaction>
</comment>
<comment type="catalytic activity">
    <reaction evidence="7">
        <text>dehydroepiandrosterone 3-sulfate(out) + n H(+)(out) = dehydroepiandrosterone 3-sulfate(in) + n H(+)(in)</text>
        <dbReference type="Rhea" id="RHEA:75487"/>
        <dbReference type="ChEBI" id="CHEBI:15378"/>
        <dbReference type="ChEBI" id="CHEBI:57905"/>
    </reaction>
</comment>
<comment type="catalytic activity">
    <reaction evidence="1">
        <text>N-acetyl-D-muramoyl-L-alanyl-D-isoglutamine(out) + n H(+)(out) = N-acetyl-D-muramoyl-L-alanyl-D-isoglutamine(in) + n H(+)(in)</text>
        <dbReference type="Rhea" id="RHEA:76371"/>
        <dbReference type="ChEBI" id="CHEBI:15378"/>
        <dbReference type="ChEBI" id="CHEBI:155830"/>
    </reaction>
    <physiologicalReaction direction="left-to-right" evidence="1">
        <dbReference type="Rhea" id="RHEA:76372"/>
    </physiologicalReaction>
</comment>
<comment type="catalytic activity">
    <reaction evidence="5">
        <text>2',3'-cGAMP(out) + n H(+)(out) = 2',3'-cGAMP(in) + n H(+)(in)</text>
        <dbReference type="Rhea" id="RHEA:76411"/>
        <dbReference type="ChEBI" id="CHEBI:15378"/>
        <dbReference type="ChEBI" id="CHEBI:143093"/>
    </reaction>
    <physiologicalReaction direction="left-to-right" evidence="12">
        <dbReference type="Rhea" id="RHEA:76412"/>
    </physiologicalReaction>
</comment>
<comment type="biophysicochemical properties">
    <kinetics>
        <KM evidence="7">5.6 uM for dehydroepiandrosterone sulfate (at pH 5)</KM>
        <KM evidence="7">33.3 uM for estrone 3-sulfate (at pH 5)</KM>
        <KM evidence="7">0.2 uM for 24-hydroxyvitamin D3 sulfate (at pH 5)</KM>
        <KM evidence="7">1.2 uM for pregnenolone sulfate (at pH 5)</KM>
        <KM evidence="7">26.7 uM for cholate (at pH 5)</KM>
        <KM evidence="7">14.6 uM for glycocholate (at pH 5)</KM>
        <KM evidence="7">11.7 uM for taurocholate (at pH 5)</KM>
        <Vmax evidence="7">1.51 nmol/min/mg enzyme toward dehydroepiandrosterone sulfate</Vmax>
        <Vmax evidence="7">1.46 nmol/min/mg enzyme estrone 3-sulfate</Vmax>
        <Vmax evidence="7">0.27 nmol/min/mg enzyme 24-hydroxyvitamin D3 sulfate</Vmax>
        <Vmax evidence="7">0.79 nmol/min/mg enzyme pregnenolone sulfate</Vmax>
        <Vmax evidence="7">2.32 nmol/min/mg enzyme cholate</Vmax>
        <Vmax evidence="7">1.31 nmol/min/mg enzyme glycocholate</Vmax>
        <Vmax evidence="7">0.78 nmol/min/mg enzyme taurocholate</Vmax>
    </kinetics>
    <phDependence>
        <text evidence="7">Optimum pH is 5.</text>
    </phDependence>
</comment>
<comment type="interaction">
    <interactant intactId="EBI-18074862">
        <id>Q7Z3Q1-2</id>
    </interactant>
    <interactant intactId="EBI-7797864">
        <id>P11912</id>
        <label>CD79A</label>
    </interactant>
    <organismsDiffer>false</organismsDiffer>
    <experiments>3</experiments>
</comment>
<comment type="subcellular location">
    <subcellularLocation>
        <location evidence="3 6 7">Lysosome membrane</location>
        <topology evidence="2">Multi-pass membrane protein</topology>
    </subcellularLocation>
</comment>
<comment type="alternative products">
    <event type="alternative splicing"/>
    <isoform>
        <id>Q7Z3Q1-1</id>
        <name>1</name>
        <sequence type="displayed"/>
    </isoform>
    <isoform>
        <id>Q7Z3Q1-2</id>
        <name>2</name>
        <sequence type="described" ref="VSP_028649"/>
    </isoform>
    <isoform>
        <id>Q7Z3Q1-3</id>
        <name>3</name>
        <sequence type="described" ref="VSP_028648"/>
    </isoform>
</comment>
<comment type="similarity">
    <text evidence="11">Belongs to the major facilitator superfamily. SLC46A family.</text>
</comment>
<comment type="sequence caution" evidence="11">
    <conflict type="frameshift">
        <sequence resource="EMBL-CDS" id="BAC85896"/>
    </conflict>
</comment>
<proteinExistence type="evidence at protein level"/>
<gene>
    <name evidence="14" type="primary">SLC46A3</name>
    <name type="ORF">FKSG16</name>
</gene>
<dbReference type="EMBL" id="AF315594">
    <property type="protein sequence ID" value="AAL18405.1"/>
    <property type="molecule type" value="mRNA"/>
</dbReference>
<dbReference type="EMBL" id="AK124604">
    <property type="protein sequence ID" value="BAC85896.1"/>
    <property type="status" value="ALT_FRAME"/>
    <property type="molecule type" value="mRNA"/>
</dbReference>
<dbReference type="EMBL" id="BX537565">
    <property type="protein sequence ID" value="CAD97783.1"/>
    <property type="molecule type" value="mRNA"/>
</dbReference>
<dbReference type="EMBL" id="AL359454">
    <property type="status" value="NOT_ANNOTATED_CDS"/>
    <property type="molecule type" value="Genomic_DNA"/>
</dbReference>
<dbReference type="EMBL" id="CH471075">
    <property type="protein sequence ID" value="EAX08436.1"/>
    <property type="molecule type" value="Genomic_DNA"/>
</dbReference>
<dbReference type="EMBL" id="CH471075">
    <property type="protein sequence ID" value="EAX08438.1"/>
    <property type="molecule type" value="Genomic_DNA"/>
</dbReference>
<dbReference type="EMBL" id="BC036662">
    <property type="protein sequence ID" value="AAH36662.1"/>
    <property type="molecule type" value="mRNA"/>
</dbReference>
<dbReference type="EMBL" id="BC060850">
    <property type="protein sequence ID" value="AAH60850.1"/>
    <property type="molecule type" value="mRNA"/>
</dbReference>
<dbReference type="EMBL" id="BC068556">
    <property type="protein sequence ID" value="AAH68556.1"/>
    <property type="molecule type" value="mRNA"/>
</dbReference>
<dbReference type="CCDS" id="CCDS45021.1">
    <molecule id="Q7Z3Q1-2"/>
</dbReference>
<dbReference type="CCDS" id="CCDS9332.1">
    <molecule id="Q7Z3Q1-1"/>
</dbReference>
<dbReference type="RefSeq" id="NP_001129391.1">
    <molecule id="Q7Z3Q1-2"/>
    <property type="nucleotide sequence ID" value="NM_001135919.2"/>
</dbReference>
<dbReference type="RefSeq" id="NP_001334889.1">
    <molecule id="Q7Z3Q1-1"/>
    <property type="nucleotide sequence ID" value="NM_001347960.2"/>
</dbReference>
<dbReference type="RefSeq" id="NP_861450.1">
    <molecule id="Q7Z3Q1-1"/>
    <property type="nucleotide sequence ID" value="NM_181785.4"/>
</dbReference>
<dbReference type="RefSeq" id="XP_005266418.1">
    <molecule id="Q7Z3Q1-2"/>
    <property type="nucleotide sequence ID" value="XM_005266361.3"/>
</dbReference>
<dbReference type="RefSeq" id="XP_054230451.1">
    <molecule id="Q7Z3Q1-2"/>
    <property type="nucleotide sequence ID" value="XM_054374476.1"/>
</dbReference>
<dbReference type="SMR" id="Q7Z3Q1"/>
<dbReference type="BioGRID" id="129597">
    <property type="interactions" value="5"/>
</dbReference>
<dbReference type="FunCoup" id="Q7Z3Q1">
    <property type="interactions" value="154"/>
</dbReference>
<dbReference type="IntAct" id="Q7Z3Q1">
    <property type="interactions" value="2"/>
</dbReference>
<dbReference type="MINT" id="Q7Z3Q1"/>
<dbReference type="TCDB" id="2.A.1.50.3">
    <property type="family name" value="the major facilitator superfamily (mfs)"/>
</dbReference>
<dbReference type="GlyCosmos" id="Q7Z3Q1">
    <property type="glycosylation" value="3 sites, No reported glycans"/>
</dbReference>
<dbReference type="GlyGen" id="Q7Z3Q1">
    <property type="glycosylation" value="3 sites"/>
</dbReference>
<dbReference type="iPTMnet" id="Q7Z3Q1"/>
<dbReference type="PhosphoSitePlus" id="Q7Z3Q1"/>
<dbReference type="SwissPalm" id="Q7Z3Q1"/>
<dbReference type="BioMuta" id="SLC46A3"/>
<dbReference type="DMDM" id="74723295"/>
<dbReference type="jPOST" id="Q7Z3Q1"/>
<dbReference type="MassIVE" id="Q7Z3Q1"/>
<dbReference type="PaxDb" id="9606-ENSP00000370192"/>
<dbReference type="PeptideAtlas" id="Q7Z3Q1"/>
<dbReference type="ProteomicsDB" id="69070">
    <molecule id="Q7Z3Q1-1"/>
</dbReference>
<dbReference type="ProteomicsDB" id="69071">
    <molecule id="Q7Z3Q1-2"/>
</dbReference>
<dbReference type="ProteomicsDB" id="69072">
    <molecule id="Q7Z3Q1-3"/>
</dbReference>
<dbReference type="Antibodypedia" id="7527">
    <property type="antibodies" value="57 antibodies from 16 providers"/>
</dbReference>
<dbReference type="DNASU" id="283537"/>
<dbReference type="Ensembl" id="ENST00000266943.11">
    <molecule id="Q7Z3Q1-1"/>
    <property type="protein sequence ID" value="ENSP00000266943.7"/>
    <property type="gene ID" value="ENSG00000139508.15"/>
</dbReference>
<dbReference type="Ensembl" id="ENST00000380814.4">
    <molecule id="Q7Z3Q1-2"/>
    <property type="protein sequence ID" value="ENSP00000370192.4"/>
    <property type="gene ID" value="ENSG00000139508.15"/>
</dbReference>
<dbReference type="GeneID" id="283537"/>
<dbReference type="KEGG" id="hsa:283537"/>
<dbReference type="MANE-Select" id="ENST00000266943.11">
    <property type="protein sequence ID" value="ENSP00000266943.7"/>
    <property type="RefSeq nucleotide sequence ID" value="NM_181785.4"/>
    <property type="RefSeq protein sequence ID" value="NP_861450.1"/>
</dbReference>
<dbReference type="UCSC" id="uc001ush.4">
    <molecule id="Q7Z3Q1-1"/>
    <property type="organism name" value="human"/>
</dbReference>
<dbReference type="AGR" id="HGNC:27501"/>
<dbReference type="CTD" id="283537"/>
<dbReference type="DisGeNET" id="283537"/>
<dbReference type="GeneCards" id="SLC46A3"/>
<dbReference type="HGNC" id="HGNC:27501">
    <property type="gene designation" value="SLC46A3"/>
</dbReference>
<dbReference type="HPA" id="ENSG00000139508">
    <property type="expression patterns" value="Tissue enhanced (intestine, liver)"/>
</dbReference>
<dbReference type="MalaCards" id="SLC46A3"/>
<dbReference type="neXtProt" id="NX_Q7Z3Q1"/>
<dbReference type="OpenTargets" id="ENSG00000139508"/>
<dbReference type="PharmGKB" id="PA162403791"/>
<dbReference type="VEuPathDB" id="HostDB:ENSG00000139508"/>
<dbReference type="eggNOG" id="KOG2816">
    <property type="taxonomic scope" value="Eukaryota"/>
</dbReference>
<dbReference type="GeneTree" id="ENSGT00950000183096"/>
<dbReference type="HOGENOM" id="CLU_028365_1_1_1"/>
<dbReference type="InParanoid" id="Q7Z3Q1"/>
<dbReference type="OMA" id="IKQMVCG"/>
<dbReference type="OrthoDB" id="3026777at2759"/>
<dbReference type="PAN-GO" id="Q7Z3Q1">
    <property type="GO annotations" value="4 GO annotations based on evolutionary models"/>
</dbReference>
<dbReference type="PhylomeDB" id="Q7Z3Q1"/>
<dbReference type="TreeFam" id="TF315701"/>
<dbReference type="PathwayCommons" id="Q7Z3Q1"/>
<dbReference type="SignaLink" id="Q7Z3Q1"/>
<dbReference type="BioGRID-ORCS" id="283537">
    <property type="hits" value="10 hits in 1161 CRISPR screens"/>
</dbReference>
<dbReference type="ChiTaRS" id="SLC46A3">
    <property type="organism name" value="human"/>
</dbReference>
<dbReference type="GenomeRNAi" id="283537"/>
<dbReference type="Pharos" id="Q7Z3Q1">
    <property type="development level" value="Tbio"/>
</dbReference>
<dbReference type="PRO" id="PR:Q7Z3Q1"/>
<dbReference type="Proteomes" id="UP000005640">
    <property type="component" value="Chromosome 13"/>
</dbReference>
<dbReference type="RNAct" id="Q7Z3Q1">
    <property type="molecule type" value="protein"/>
</dbReference>
<dbReference type="Bgee" id="ENSG00000139508">
    <property type="expression patterns" value="Expressed in ileal mucosa and 167 other cell types or tissues"/>
</dbReference>
<dbReference type="ExpressionAtlas" id="Q7Z3Q1">
    <property type="expression patterns" value="baseline and differential"/>
</dbReference>
<dbReference type="GO" id="GO:0070062">
    <property type="term" value="C:extracellular exosome"/>
    <property type="evidence" value="ECO:0007005"/>
    <property type="project" value="UniProtKB"/>
</dbReference>
<dbReference type="GO" id="GO:0005765">
    <property type="term" value="C:lysosomal membrane"/>
    <property type="evidence" value="ECO:0000315"/>
    <property type="project" value="FlyBase"/>
</dbReference>
<dbReference type="GO" id="GO:0005375">
    <property type="term" value="F:copper ion transmembrane transporter activity"/>
    <property type="evidence" value="ECO:0007669"/>
    <property type="project" value="Ensembl"/>
</dbReference>
<dbReference type="GO" id="GO:0015293">
    <property type="term" value="F:symporter activity"/>
    <property type="evidence" value="ECO:0007669"/>
    <property type="project" value="UniProtKB-KW"/>
</dbReference>
<dbReference type="GO" id="GO:0022857">
    <property type="term" value="F:transmembrane transporter activity"/>
    <property type="evidence" value="ECO:0000315"/>
    <property type="project" value="FlyBase"/>
</dbReference>
<dbReference type="GO" id="GO:1904613">
    <property type="term" value="P:cellular response to 2,3,7,8-tetrachlorodibenzodioxine"/>
    <property type="evidence" value="ECO:0007669"/>
    <property type="project" value="Ensembl"/>
</dbReference>
<dbReference type="GO" id="GO:0034486">
    <property type="term" value="P:vacuolar transmembrane transport"/>
    <property type="evidence" value="ECO:0000315"/>
    <property type="project" value="FlyBase"/>
</dbReference>
<dbReference type="CDD" id="cd17448">
    <property type="entry name" value="MFS_SLC46A3"/>
    <property type="match status" value="1"/>
</dbReference>
<dbReference type="Gene3D" id="1.20.1250.20">
    <property type="entry name" value="MFS general substrate transporter like domains"/>
    <property type="match status" value="1"/>
</dbReference>
<dbReference type="InterPro" id="IPR011701">
    <property type="entry name" value="MFS"/>
</dbReference>
<dbReference type="InterPro" id="IPR036259">
    <property type="entry name" value="MFS_trans_sf"/>
</dbReference>
<dbReference type="PANTHER" id="PTHR23507:SF9">
    <property type="entry name" value="LYSOSOMAL PROTON-COUPLED STEROID CONJUGATE AND BILE ACID SYMPORTER SLC46A3"/>
    <property type="match status" value="1"/>
</dbReference>
<dbReference type="PANTHER" id="PTHR23507">
    <property type="entry name" value="ZGC:174356"/>
    <property type="match status" value="1"/>
</dbReference>
<dbReference type="Pfam" id="PF07690">
    <property type="entry name" value="MFS_1"/>
    <property type="match status" value="1"/>
</dbReference>
<dbReference type="SUPFAM" id="SSF103473">
    <property type="entry name" value="MFS general substrate transporter"/>
    <property type="match status" value="1"/>
</dbReference>
<organism>
    <name type="scientific">Homo sapiens</name>
    <name type="common">Human</name>
    <dbReference type="NCBI Taxonomy" id="9606"/>
    <lineage>
        <taxon>Eukaryota</taxon>
        <taxon>Metazoa</taxon>
        <taxon>Chordata</taxon>
        <taxon>Craniata</taxon>
        <taxon>Vertebrata</taxon>
        <taxon>Euteleostomi</taxon>
        <taxon>Mammalia</taxon>
        <taxon>Eutheria</taxon>
        <taxon>Euarchontoglires</taxon>
        <taxon>Primates</taxon>
        <taxon>Haplorrhini</taxon>
        <taxon>Catarrhini</taxon>
        <taxon>Hominidae</taxon>
        <taxon>Homo</taxon>
    </lineage>
</organism>